<accession>Q24SX0</accession>
<proteinExistence type="inferred from homology"/>
<gene>
    <name evidence="1" type="primary">glyS</name>
    <name type="ordered locus">DSY3083</name>
</gene>
<feature type="chain" id="PRO_1000101272" description="Glycine--tRNA ligase beta subunit">
    <location>
        <begin position="1"/>
        <end position="690"/>
    </location>
</feature>
<dbReference type="EC" id="6.1.1.14" evidence="1"/>
<dbReference type="EMBL" id="AP008230">
    <property type="protein sequence ID" value="BAE84872.1"/>
    <property type="molecule type" value="Genomic_DNA"/>
</dbReference>
<dbReference type="RefSeq" id="WP_011460837.1">
    <property type="nucleotide sequence ID" value="NC_007907.1"/>
</dbReference>
<dbReference type="SMR" id="Q24SX0"/>
<dbReference type="STRING" id="138119.DSY3083"/>
<dbReference type="KEGG" id="dsy:DSY3083"/>
<dbReference type="eggNOG" id="COG0751">
    <property type="taxonomic scope" value="Bacteria"/>
</dbReference>
<dbReference type="HOGENOM" id="CLU_007220_2_2_9"/>
<dbReference type="Proteomes" id="UP000001946">
    <property type="component" value="Chromosome"/>
</dbReference>
<dbReference type="GO" id="GO:0005829">
    <property type="term" value="C:cytosol"/>
    <property type="evidence" value="ECO:0007669"/>
    <property type="project" value="TreeGrafter"/>
</dbReference>
<dbReference type="GO" id="GO:0004814">
    <property type="term" value="F:arginine-tRNA ligase activity"/>
    <property type="evidence" value="ECO:0007669"/>
    <property type="project" value="InterPro"/>
</dbReference>
<dbReference type="GO" id="GO:0005524">
    <property type="term" value="F:ATP binding"/>
    <property type="evidence" value="ECO:0007669"/>
    <property type="project" value="UniProtKB-UniRule"/>
</dbReference>
<dbReference type="GO" id="GO:0004820">
    <property type="term" value="F:glycine-tRNA ligase activity"/>
    <property type="evidence" value="ECO:0007669"/>
    <property type="project" value="UniProtKB-UniRule"/>
</dbReference>
<dbReference type="GO" id="GO:0006420">
    <property type="term" value="P:arginyl-tRNA aminoacylation"/>
    <property type="evidence" value="ECO:0007669"/>
    <property type="project" value="InterPro"/>
</dbReference>
<dbReference type="GO" id="GO:0006426">
    <property type="term" value="P:glycyl-tRNA aminoacylation"/>
    <property type="evidence" value="ECO:0007669"/>
    <property type="project" value="UniProtKB-UniRule"/>
</dbReference>
<dbReference type="HAMAP" id="MF_00255">
    <property type="entry name" value="Gly_tRNA_synth_beta"/>
    <property type="match status" value="1"/>
</dbReference>
<dbReference type="InterPro" id="IPR008909">
    <property type="entry name" value="DALR_anticod-bd"/>
</dbReference>
<dbReference type="InterPro" id="IPR015944">
    <property type="entry name" value="Gly-tRNA-synth_bsu"/>
</dbReference>
<dbReference type="InterPro" id="IPR006194">
    <property type="entry name" value="Gly-tRNA-synth_heterodimer"/>
</dbReference>
<dbReference type="NCBIfam" id="TIGR00211">
    <property type="entry name" value="glyS"/>
    <property type="match status" value="1"/>
</dbReference>
<dbReference type="PANTHER" id="PTHR30075:SF2">
    <property type="entry name" value="GLYCINE--TRNA LIGASE, CHLOROPLASTIC_MITOCHONDRIAL 2"/>
    <property type="match status" value="1"/>
</dbReference>
<dbReference type="PANTHER" id="PTHR30075">
    <property type="entry name" value="GLYCYL-TRNA SYNTHETASE"/>
    <property type="match status" value="1"/>
</dbReference>
<dbReference type="Pfam" id="PF05746">
    <property type="entry name" value="DALR_1"/>
    <property type="match status" value="1"/>
</dbReference>
<dbReference type="Pfam" id="PF02092">
    <property type="entry name" value="tRNA_synt_2f"/>
    <property type="match status" value="1"/>
</dbReference>
<dbReference type="PRINTS" id="PR01045">
    <property type="entry name" value="TRNASYNTHGB"/>
</dbReference>
<dbReference type="SUPFAM" id="SSF109604">
    <property type="entry name" value="HD-domain/PDEase-like"/>
    <property type="match status" value="1"/>
</dbReference>
<dbReference type="PROSITE" id="PS50861">
    <property type="entry name" value="AA_TRNA_LIGASE_II_GLYAB"/>
    <property type="match status" value="1"/>
</dbReference>
<evidence type="ECO:0000255" key="1">
    <source>
        <dbReference type="HAMAP-Rule" id="MF_00255"/>
    </source>
</evidence>
<comment type="catalytic activity">
    <reaction evidence="1">
        <text>tRNA(Gly) + glycine + ATP = glycyl-tRNA(Gly) + AMP + diphosphate</text>
        <dbReference type="Rhea" id="RHEA:16013"/>
        <dbReference type="Rhea" id="RHEA-COMP:9664"/>
        <dbReference type="Rhea" id="RHEA-COMP:9683"/>
        <dbReference type="ChEBI" id="CHEBI:30616"/>
        <dbReference type="ChEBI" id="CHEBI:33019"/>
        <dbReference type="ChEBI" id="CHEBI:57305"/>
        <dbReference type="ChEBI" id="CHEBI:78442"/>
        <dbReference type="ChEBI" id="CHEBI:78522"/>
        <dbReference type="ChEBI" id="CHEBI:456215"/>
        <dbReference type="EC" id="6.1.1.14"/>
    </reaction>
</comment>
<comment type="subunit">
    <text evidence="1">Tetramer of two alpha and two beta subunits.</text>
</comment>
<comment type="subcellular location">
    <subcellularLocation>
        <location evidence="1">Cytoplasm</location>
    </subcellularLocation>
</comment>
<comment type="similarity">
    <text evidence="1">Belongs to the class-II aminoacyl-tRNA synthetase family.</text>
</comment>
<name>SYGB_DESHY</name>
<protein>
    <recommendedName>
        <fullName evidence="1">Glycine--tRNA ligase beta subunit</fullName>
        <ecNumber evidence="1">6.1.1.14</ecNumber>
    </recommendedName>
    <alternativeName>
        <fullName evidence="1">Glycyl-tRNA synthetase beta subunit</fullName>
        <shortName evidence="1">GlyRS</shortName>
    </alternativeName>
</protein>
<keyword id="KW-0030">Aminoacyl-tRNA synthetase</keyword>
<keyword id="KW-0067">ATP-binding</keyword>
<keyword id="KW-0963">Cytoplasm</keyword>
<keyword id="KW-0436">Ligase</keyword>
<keyword id="KW-0547">Nucleotide-binding</keyword>
<keyword id="KW-0648">Protein biosynthesis</keyword>
<keyword id="KW-1185">Reference proteome</keyword>
<sequence length="690" mass="76701">MAKDFLLEIGTEEIPAKFAPGVLNQLREQAQKHCQELRLDYQDLKVYTTPRRFAVLIQGLAEKQTDFTAEVKGPAVKAAYDAEGNPTKAAQGFARGQGVEPKDLFVQELNGVSYVYARKFELGQPTLQLLPKLCTDLITGLHFPKPMRWADLEFRFARPIRWIVALFGSEVIPFEFVGLASGKASRGHRTLGGPVTLDSPADYEKQMLQAFVMVDPEQRRQSVWEQIHALAAKVGGDVEKDDDLLDEVTHIIEYPTALLGEVAPNYMHLPEPVITTPMKEHQRYFPVRDKEGKLLPYFITVRNGDDHALAKVKAGNEKVLKARLEDAAFYYREDQKTPLAELVEKLDKVTYHEKLGSVRQRVERIRTLARGIAARLGMESKKQDLVERTALLAKADLVTLMVYDFPELQGIMGADYARMVGEKPEVCTGILEHYQPRFAGDELPQSYTGQIVSVADKLDAIVGAFGIGIQPTGSQDPYALRRQAQGVVGIILEAGWDISLEQLIAASYVNFAEQGISLLPLADLQSALQDFFQQRLRFVLQEQGARYDTLDAVLAQGSNQITRAARKAQVLAAKRETTEFVPYSQAYIRCLNLSKKAQTQPLDPKNLIDPTEIALAAALVQRQEAFAALIEKGDYAEAYALASELIPMIEALFNAVMIMVEDEILKQARLALLGECVAILGCLGDLSLLA</sequence>
<organism>
    <name type="scientific">Desulfitobacterium hafniense (strain Y51)</name>
    <dbReference type="NCBI Taxonomy" id="138119"/>
    <lineage>
        <taxon>Bacteria</taxon>
        <taxon>Bacillati</taxon>
        <taxon>Bacillota</taxon>
        <taxon>Clostridia</taxon>
        <taxon>Eubacteriales</taxon>
        <taxon>Desulfitobacteriaceae</taxon>
        <taxon>Desulfitobacterium</taxon>
    </lineage>
</organism>
<reference key="1">
    <citation type="journal article" date="2006" name="J. Bacteriol.">
        <title>Complete genome sequence of the dehalorespiring bacterium Desulfitobacterium hafniense Y51 and comparison with Dehalococcoides ethenogenes 195.</title>
        <authorList>
            <person name="Nonaka H."/>
            <person name="Keresztes G."/>
            <person name="Shinoda Y."/>
            <person name="Ikenaga Y."/>
            <person name="Abe M."/>
            <person name="Naito K."/>
            <person name="Inatomi K."/>
            <person name="Furukawa K."/>
            <person name="Inui M."/>
            <person name="Yukawa H."/>
        </authorList>
    </citation>
    <scope>NUCLEOTIDE SEQUENCE [LARGE SCALE GENOMIC DNA]</scope>
    <source>
        <strain>Y51</strain>
    </source>
</reference>